<sequence>MEACNCIEPQWPADELLMKYQYISDFFIALAYFSIPLELIYFVKKSAVFPYRWVLVQFGAFIVLCGATHLINLWTFSMHSRTVAIVMTTAKVLTAVVSCATALMLVHIIPDLLSVKTRELFLKNKAAELDREMGLIRTQEETGRHVRMLTHEIRSTLDRHTILKTTLVELGRTLALEECALWMPTRTGLELQLSYTLRQQNPVGYTVPIHLPVINQVFSSNRALKISPNSPVARMRPLAGKHMPGEVVAVRVPLLHLSNFQINDWPELSTKRYALMVLMLPSDSARQWHVHELELVEVVADQVAVALSHAAILEESMRARDLLMEQNIALDLARREAETAIRARNDFLAVMNHEMRTPMHAIIALSSLLQETELTPEQRLMVETILKSSHLLATLINDVLDLSRLEDGSLQLEIATFNLHSVFREVHNLIKPVASVKKLSVSLNLAADLPVQAVGDEKRLMQIVLNVVGNAVKFSKEGSISITAFVAKSESLRDFRAPEFFPAQSDNHFYLRVQVKDSGSGINPQDIPKLFTKFAQTQSLATRNSGGSGLGLAICKRFVNLMEGHIWIESEGPGKGCTAIFIVKLGFAERSNESKLPFLTKVQANHVQTNFPGLKVLVMDDNGSVTKGLLVHLGCDVTTVSSIDEFLHVISQEHKVVFMDVCMPGIDGYELAVRIHEKFTKRHERPVLVALTGNIDKMTKENCMRVGMDGVILKPVSVDKMRSVLSELLEHRVLFEAM</sequence>
<keyword id="KW-0067">ATP-binding</keyword>
<keyword id="KW-0186">Copper</keyword>
<keyword id="KW-1015">Disulfide bond</keyword>
<keyword id="KW-0256">Endoplasmic reticulum</keyword>
<keyword id="KW-0936">Ethylene signaling pathway</keyword>
<keyword id="KW-0418">Kinase</keyword>
<keyword id="KW-0472">Membrane</keyword>
<keyword id="KW-0479">Metal-binding</keyword>
<keyword id="KW-0547">Nucleotide-binding</keyword>
<keyword id="KW-0597">Phosphoprotein</keyword>
<keyword id="KW-0675">Receptor</keyword>
<keyword id="KW-0808">Transferase</keyword>
<keyword id="KW-0812">Transmembrane</keyword>
<keyword id="KW-1133">Transmembrane helix</keyword>
<keyword id="KW-0902">Two-component regulatory system</keyword>
<proteinExistence type="evidence at transcript level"/>
<accession>Q9M7M1</accession>
<protein>
    <recommendedName>
        <fullName>Ethylene receptor</fullName>
        <ecNumber>2.7.13.3</ecNumber>
    </recommendedName>
</protein>
<comment type="function">
    <text evidence="1">May act early in the ethylene signal transduction pathway, possibly as an ethylene receptor, or as a regulator of the pathway.</text>
</comment>
<comment type="catalytic activity">
    <reaction>
        <text>ATP + protein L-histidine = ADP + protein N-phospho-L-histidine.</text>
        <dbReference type="EC" id="2.7.13.3"/>
    </reaction>
</comment>
<comment type="cofactor">
    <cofactor evidence="1">
        <name>Cu cation</name>
        <dbReference type="ChEBI" id="CHEBI:23378"/>
    </cofactor>
    <text evidence="1">Binds 1 copper ion per dimer.</text>
</comment>
<comment type="subunit">
    <text evidence="1">Homodimer; disulfide-linked.</text>
</comment>
<comment type="subcellular location">
    <subcellularLocation>
        <location evidence="1">Endoplasmic reticulum membrane</location>
        <topology evidence="1">Multi-pass membrane protein</topology>
    </subcellularLocation>
</comment>
<comment type="PTM">
    <text evidence="1">Activation probably requires a transfer of a phosphate group between a His in the transmitter domain and an Asp of the receiver domain.</text>
</comment>
<comment type="similarity">
    <text evidence="5">Belongs to the ethylene receptor family.</text>
</comment>
<name>ETR1_PRUPE</name>
<evidence type="ECO:0000250" key="1"/>
<evidence type="ECO:0000255" key="2"/>
<evidence type="ECO:0000255" key="3">
    <source>
        <dbReference type="PROSITE-ProRule" id="PRU00107"/>
    </source>
</evidence>
<evidence type="ECO:0000255" key="4">
    <source>
        <dbReference type="PROSITE-ProRule" id="PRU00169"/>
    </source>
</evidence>
<evidence type="ECO:0000305" key="5"/>
<dbReference type="EC" id="2.7.13.3"/>
<dbReference type="EMBL" id="AF124527">
    <property type="protein sequence ID" value="AAF28893.1"/>
    <property type="molecule type" value="mRNA"/>
</dbReference>
<dbReference type="SMR" id="Q9M7M1"/>
<dbReference type="eggNOG" id="KOG0519">
    <property type="taxonomic scope" value="Eukaryota"/>
</dbReference>
<dbReference type="GO" id="GO:0005789">
    <property type="term" value="C:endoplasmic reticulum membrane"/>
    <property type="evidence" value="ECO:0007669"/>
    <property type="project" value="UniProtKB-SubCell"/>
</dbReference>
<dbReference type="GO" id="GO:0005524">
    <property type="term" value="F:ATP binding"/>
    <property type="evidence" value="ECO:0007669"/>
    <property type="project" value="UniProtKB-KW"/>
</dbReference>
<dbReference type="GO" id="GO:0051740">
    <property type="term" value="F:ethylene binding"/>
    <property type="evidence" value="ECO:0007669"/>
    <property type="project" value="InterPro"/>
</dbReference>
<dbReference type="GO" id="GO:0038199">
    <property type="term" value="F:ethylene receptor activity"/>
    <property type="evidence" value="ECO:0007669"/>
    <property type="project" value="InterPro"/>
</dbReference>
<dbReference type="GO" id="GO:0046872">
    <property type="term" value="F:metal ion binding"/>
    <property type="evidence" value="ECO:0007669"/>
    <property type="project" value="UniProtKB-KW"/>
</dbReference>
<dbReference type="GO" id="GO:0000155">
    <property type="term" value="F:phosphorelay sensor kinase activity"/>
    <property type="evidence" value="ECO:0007669"/>
    <property type="project" value="InterPro"/>
</dbReference>
<dbReference type="GO" id="GO:0010105">
    <property type="term" value="P:negative regulation of ethylene-activated signaling pathway"/>
    <property type="evidence" value="ECO:0007669"/>
    <property type="project" value="UniProtKB-ARBA"/>
</dbReference>
<dbReference type="CDD" id="cd16922">
    <property type="entry name" value="HATPase_EvgS-ArcB-TorS-like"/>
    <property type="match status" value="1"/>
</dbReference>
<dbReference type="CDD" id="cd00082">
    <property type="entry name" value="HisKA"/>
    <property type="match status" value="1"/>
</dbReference>
<dbReference type="FunFam" id="3.40.50.2300:FF:000192">
    <property type="entry name" value="Ethylene receptor"/>
    <property type="match status" value="1"/>
</dbReference>
<dbReference type="FunFam" id="1.10.287.130:FF:000004">
    <property type="entry name" value="Ethylene receptor 1"/>
    <property type="match status" value="1"/>
</dbReference>
<dbReference type="FunFam" id="3.30.565.10:FF:000030">
    <property type="entry name" value="Ethylene receptor 1"/>
    <property type="match status" value="1"/>
</dbReference>
<dbReference type="FunFam" id="3.30.450.40:FF:000026">
    <property type="entry name" value="Ethylene response sensor"/>
    <property type="match status" value="1"/>
</dbReference>
<dbReference type="Gene3D" id="1.10.287.130">
    <property type="match status" value="1"/>
</dbReference>
<dbReference type="Gene3D" id="3.30.450.40">
    <property type="match status" value="1"/>
</dbReference>
<dbReference type="Gene3D" id="3.40.50.2300">
    <property type="match status" value="1"/>
</dbReference>
<dbReference type="Gene3D" id="3.30.565.10">
    <property type="entry name" value="Histidine kinase-like ATPase, C-terminal domain"/>
    <property type="match status" value="1"/>
</dbReference>
<dbReference type="InterPro" id="IPR011006">
    <property type="entry name" value="CheY-like_superfamily"/>
</dbReference>
<dbReference type="InterPro" id="IPR014525">
    <property type="entry name" value="ETR"/>
</dbReference>
<dbReference type="InterPro" id="IPR003018">
    <property type="entry name" value="GAF"/>
</dbReference>
<dbReference type="InterPro" id="IPR029016">
    <property type="entry name" value="GAF-like_dom_sf"/>
</dbReference>
<dbReference type="InterPro" id="IPR036890">
    <property type="entry name" value="HATPase_C_sf"/>
</dbReference>
<dbReference type="InterPro" id="IPR005467">
    <property type="entry name" value="His_kinase_dom"/>
</dbReference>
<dbReference type="InterPro" id="IPR003661">
    <property type="entry name" value="HisK_dim/P_dom"/>
</dbReference>
<dbReference type="InterPro" id="IPR036097">
    <property type="entry name" value="HisK_dim/P_sf"/>
</dbReference>
<dbReference type="InterPro" id="IPR004358">
    <property type="entry name" value="Sig_transdc_His_kin-like_C"/>
</dbReference>
<dbReference type="InterPro" id="IPR001789">
    <property type="entry name" value="Sig_transdc_resp-reg_receiver"/>
</dbReference>
<dbReference type="PANTHER" id="PTHR24423:SF615">
    <property type="entry name" value="ETHYLENE RECEPTOR 1"/>
    <property type="match status" value="1"/>
</dbReference>
<dbReference type="PANTHER" id="PTHR24423">
    <property type="entry name" value="TWO-COMPONENT SENSOR HISTIDINE KINASE"/>
    <property type="match status" value="1"/>
</dbReference>
<dbReference type="Pfam" id="PF25487">
    <property type="entry name" value="ETR1_N"/>
    <property type="match status" value="1"/>
</dbReference>
<dbReference type="Pfam" id="PF01590">
    <property type="entry name" value="GAF"/>
    <property type="match status" value="1"/>
</dbReference>
<dbReference type="Pfam" id="PF02518">
    <property type="entry name" value="HATPase_c"/>
    <property type="match status" value="1"/>
</dbReference>
<dbReference type="Pfam" id="PF00512">
    <property type="entry name" value="HisKA"/>
    <property type="match status" value="1"/>
</dbReference>
<dbReference type="Pfam" id="PF00072">
    <property type="entry name" value="Response_reg"/>
    <property type="match status" value="1"/>
</dbReference>
<dbReference type="PIRSF" id="PIRSF026389">
    <property type="entry name" value="Ethyln_sen_HK"/>
    <property type="match status" value="1"/>
</dbReference>
<dbReference type="PRINTS" id="PR00344">
    <property type="entry name" value="BCTRLSENSOR"/>
</dbReference>
<dbReference type="SMART" id="SM00065">
    <property type="entry name" value="GAF"/>
    <property type="match status" value="1"/>
</dbReference>
<dbReference type="SMART" id="SM00387">
    <property type="entry name" value="HATPase_c"/>
    <property type="match status" value="1"/>
</dbReference>
<dbReference type="SMART" id="SM00388">
    <property type="entry name" value="HisKA"/>
    <property type="match status" value="1"/>
</dbReference>
<dbReference type="SMART" id="SM00448">
    <property type="entry name" value="REC"/>
    <property type="match status" value="1"/>
</dbReference>
<dbReference type="SUPFAM" id="SSF55874">
    <property type="entry name" value="ATPase domain of HSP90 chaperone/DNA topoisomerase II/histidine kinase"/>
    <property type="match status" value="1"/>
</dbReference>
<dbReference type="SUPFAM" id="SSF52172">
    <property type="entry name" value="CheY-like"/>
    <property type="match status" value="1"/>
</dbReference>
<dbReference type="SUPFAM" id="SSF55781">
    <property type="entry name" value="GAF domain-like"/>
    <property type="match status" value="1"/>
</dbReference>
<dbReference type="SUPFAM" id="SSF47384">
    <property type="entry name" value="Homodimeric domain of signal transducing histidine kinase"/>
    <property type="match status" value="1"/>
</dbReference>
<dbReference type="PROSITE" id="PS50109">
    <property type="entry name" value="HIS_KIN"/>
    <property type="match status" value="1"/>
</dbReference>
<dbReference type="PROSITE" id="PS50110">
    <property type="entry name" value="RESPONSE_REGULATORY"/>
    <property type="match status" value="1"/>
</dbReference>
<reference key="1">
    <citation type="submission" date="1999-01" db="EMBL/GenBank/DDBJ databases">
        <title>ETR (ethylene receptor) homologue from peach (Prunus persica).</title>
        <authorList>
            <person name="Bassett C.B."/>
            <person name="Artlip T.S."/>
            <person name="Nickerson M.L."/>
        </authorList>
    </citation>
    <scope>NUCLEOTIDE SEQUENCE [MRNA]</scope>
    <source>
        <strain>cv. Loring</strain>
    </source>
</reference>
<organism>
    <name type="scientific">Prunus persica</name>
    <name type="common">Peach</name>
    <name type="synonym">Amygdalus persica</name>
    <dbReference type="NCBI Taxonomy" id="3760"/>
    <lineage>
        <taxon>Eukaryota</taxon>
        <taxon>Viridiplantae</taxon>
        <taxon>Streptophyta</taxon>
        <taxon>Embryophyta</taxon>
        <taxon>Tracheophyta</taxon>
        <taxon>Spermatophyta</taxon>
        <taxon>Magnoliopsida</taxon>
        <taxon>eudicotyledons</taxon>
        <taxon>Gunneridae</taxon>
        <taxon>Pentapetalae</taxon>
        <taxon>rosids</taxon>
        <taxon>fabids</taxon>
        <taxon>Rosales</taxon>
        <taxon>Rosaceae</taxon>
        <taxon>Amygdaloideae</taxon>
        <taxon>Amygdaleae</taxon>
        <taxon>Prunus</taxon>
    </lineage>
</organism>
<feature type="chain" id="PRO_0000081422" description="Ethylene receptor">
    <location>
        <begin position="1"/>
        <end position="738"/>
    </location>
</feature>
<feature type="transmembrane region" description="Helical" evidence="2">
    <location>
        <begin position="23"/>
        <end position="43"/>
    </location>
</feature>
<feature type="transmembrane region" description="Helical" evidence="2">
    <location>
        <begin position="54"/>
        <end position="74"/>
    </location>
</feature>
<feature type="transmembrane region" description="Helical" evidence="2">
    <location>
        <begin position="92"/>
        <end position="112"/>
    </location>
</feature>
<feature type="domain" description="GAF">
    <location>
        <begin position="158"/>
        <end position="307"/>
    </location>
</feature>
<feature type="domain" description="Histidine kinase" evidence="3">
    <location>
        <begin position="350"/>
        <end position="589"/>
    </location>
</feature>
<feature type="domain" description="Response regulatory" evidence="4">
    <location>
        <begin position="612"/>
        <end position="729"/>
    </location>
</feature>
<feature type="binding site" evidence="1">
    <location>
        <position position="65"/>
    </location>
    <ligand>
        <name>Cu cation</name>
        <dbReference type="ChEBI" id="CHEBI:23378"/>
    </ligand>
</feature>
<feature type="binding site" evidence="1">
    <location>
        <position position="69"/>
    </location>
    <ligand>
        <name>Cu cation</name>
        <dbReference type="ChEBI" id="CHEBI:23378"/>
    </ligand>
</feature>
<feature type="modified residue" description="Phosphohistidine; by autocatalysis" evidence="3">
    <location>
        <position position="353"/>
    </location>
</feature>
<feature type="modified residue" description="4-aspartylphosphate" evidence="4">
    <location>
        <position position="660"/>
    </location>
</feature>
<feature type="disulfide bond" description="Interchain" evidence="1">
    <location>
        <position position="4"/>
    </location>
</feature>
<feature type="disulfide bond" description="Interchain" evidence="1">
    <location>
        <position position="6"/>
    </location>
</feature>
<gene>
    <name type="primary">ETR1</name>
</gene>